<reference key="1">
    <citation type="journal article" date="2009" name="J. Bacteriol.">
        <title>The genome of Burkholderia cenocepacia J2315, an epidemic pathogen of cystic fibrosis patients.</title>
        <authorList>
            <person name="Holden M.T."/>
            <person name="Seth-Smith H.M."/>
            <person name="Crossman L.C."/>
            <person name="Sebaihia M."/>
            <person name="Bentley S.D."/>
            <person name="Cerdeno-Tarraga A.M."/>
            <person name="Thomson N.R."/>
            <person name="Bason N."/>
            <person name="Quail M.A."/>
            <person name="Sharp S."/>
            <person name="Cherevach I."/>
            <person name="Churcher C."/>
            <person name="Goodhead I."/>
            <person name="Hauser H."/>
            <person name="Holroyd N."/>
            <person name="Mungall K."/>
            <person name="Scott P."/>
            <person name="Walker D."/>
            <person name="White B."/>
            <person name="Rose H."/>
            <person name="Iversen P."/>
            <person name="Mil-Homens D."/>
            <person name="Rocha E.P."/>
            <person name="Fialho A.M."/>
            <person name="Baldwin A."/>
            <person name="Dowson C."/>
            <person name="Barrell B.G."/>
            <person name="Govan J.R."/>
            <person name="Vandamme P."/>
            <person name="Hart C.A."/>
            <person name="Mahenthiralingam E."/>
            <person name="Parkhill J."/>
        </authorList>
    </citation>
    <scope>NUCLEOTIDE SEQUENCE [LARGE SCALE GENOMIC DNA]</scope>
    <source>
        <strain>ATCC BAA-245 / DSM 16553 / LMG 16656 / NCTC 13227 / J2315 / CF5610</strain>
    </source>
</reference>
<comment type="function">
    <text evidence="1">Binds 16S rRNA, required for the assembly of 30S particles and may also be responsible for determining the conformation of the 16S rRNA at the A site.</text>
</comment>
<comment type="subunit">
    <text evidence="1">Part of the 30S ribosomal subunit. Contacts proteins S3 and S10.</text>
</comment>
<comment type="similarity">
    <text evidence="1">Belongs to the universal ribosomal protein uS14 family.</text>
</comment>
<proteinExistence type="inferred from homology"/>
<gene>
    <name evidence="1" type="primary">rpsN</name>
    <name type="ordered locus">BceJ2315_02500</name>
    <name type="ORF">BCAL0247</name>
</gene>
<keyword id="KW-0687">Ribonucleoprotein</keyword>
<keyword id="KW-0689">Ribosomal protein</keyword>
<keyword id="KW-0694">RNA-binding</keyword>
<keyword id="KW-0699">rRNA-binding</keyword>
<dbReference type="EMBL" id="AM747720">
    <property type="protein sequence ID" value="CAR50558.1"/>
    <property type="molecule type" value="Genomic_DNA"/>
</dbReference>
<dbReference type="RefSeq" id="WP_006482884.1">
    <property type="nucleotide sequence ID" value="NC_011000.1"/>
</dbReference>
<dbReference type="SMR" id="B4E5D3"/>
<dbReference type="GeneID" id="98107147"/>
<dbReference type="KEGG" id="bcj:BCAL0247"/>
<dbReference type="eggNOG" id="COG0199">
    <property type="taxonomic scope" value="Bacteria"/>
</dbReference>
<dbReference type="HOGENOM" id="CLU_139869_0_1_4"/>
<dbReference type="BioCyc" id="BCEN216591:G1G1V-290-MONOMER"/>
<dbReference type="Proteomes" id="UP000001035">
    <property type="component" value="Chromosome 1"/>
</dbReference>
<dbReference type="GO" id="GO:0005737">
    <property type="term" value="C:cytoplasm"/>
    <property type="evidence" value="ECO:0007669"/>
    <property type="project" value="UniProtKB-ARBA"/>
</dbReference>
<dbReference type="GO" id="GO:0015935">
    <property type="term" value="C:small ribosomal subunit"/>
    <property type="evidence" value="ECO:0007669"/>
    <property type="project" value="TreeGrafter"/>
</dbReference>
<dbReference type="GO" id="GO:0019843">
    <property type="term" value="F:rRNA binding"/>
    <property type="evidence" value="ECO:0007669"/>
    <property type="project" value="UniProtKB-UniRule"/>
</dbReference>
<dbReference type="GO" id="GO:0003735">
    <property type="term" value="F:structural constituent of ribosome"/>
    <property type="evidence" value="ECO:0007669"/>
    <property type="project" value="InterPro"/>
</dbReference>
<dbReference type="GO" id="GO:0006412">
    <property type="term" value="P:translation"/>
    <property type="evidence" value="ECO:0007669"/>
    <property type="project" value="UniProtKB-UniRule"/>
</dbReference>
<dbReference type="FunFam" id="1.10.287.1480:FF:000001">
    <property type="entry name" value="30S ribosomal protein S14"/>
    <property type="match status" value="1"/>
</dbReference>
<dbReference type="Gene3D" id="1.10.287.1480">
    <property type="match status" value="1"/>
</dbReference>
<dbReference type="HAMAP" id="MF_00537">
    <property type="entry name" value="Ribosomal_uS14_1"/>
    <property type="match status" value="1"/>
</dbReference>
<dbReference type="InterPro" id="IPR001209">
    <property type="entry name" value="Ribosomal_uS14"/>
</dbReference>
<dbReference type="InterPro" id="IPR023036">
    <property type="entry name" value="Ribosomal_uS14_bac/plastid"/>
</dbReference>
<dbReference type="NCBIfam" id="NF006477">
    <property type="entry name" value="PRK08881.1"/>
    <property type="match status" value="1"/>
</dbReference>
<dbReference type="PANTHER" id="PTHR19836">
    <property type="entry name" value="30S RIBOSOMAL PROTEIN S14"/>
    <property type="match status" value="1"/>
</dbReference>
<dbReference type="PANTHER" id="PTHR19836:SF19">
    <property type="entry name" value="SMALL RIBOSOMAL SUBUNIT PROTEIN US14M"/>
    <property type="match status" value="1"/>
</dbReference>
<dbReference type="Pfam" id="PF00253">
    <property type="entry name" value="Ribosomal_S14"/>
    <property type="match status" value="1"/>
</dbReference>
<dbReference type="SUPFAM" id="SSF57716">
    <property type="entry name" value="Glucocorticoid receptor-like (DNA-binding domain)"/>
    <property type="match status" value="1"/>
</dbReference>
<organism>
    <name type="scientific">Burkholderia cenocepacia (strain ATCC BAA-245 / DSM 16553 / LMG 16656 / NCTC 13227 / J2315 / CF5610)</name>
    <name type="common">Burkholderia cepacia (strain J2315)</name>
    <dbReference type="NCBI Taxonomy" id="216591"/>
    <lineage>
        <taxon>Bacteria</taxon>
        <taxon>Pseudomonadati</taxon>
        <taxon>Pseudomonadota</taxon>
        <taxon>Betaproteobacteria</taxon>
        <taxon>Burkholderiales</taxon>
        <taxon>Burkholderiaceae</taxon>
        <taxon>Burkholderia</taxon>
        <taxon>Burkholderia cepacia complex</taxon>
    </lineage>
</organism>
<protein>
    <recommendedName>
        <fullName evidence="1">Small ribosomal subunit protein uS14</fullName>
    </recommendedName>
    <alternativeName>
        <fullName evidence="2">30S ribosomal protein S14</fullName>
    </alternativeName>
</protein>
<accession>B4E5D3</accession>
<name>RS14_BURCJ</name>
<feature type="chain" id="PRO_1000128330" description="Small ribosomal subunit protein uS14">
    <location>
        <begin position="1"/>
        <end position="101"/>
    </location>
</feature>
<evidence type="ECO:0000255" key="1">
    <source>
        <dbReference type="HAMAP-Rule" id="MF_00537"/>
    </source>
</evidence>
<evidence type="ECO:0000305" key="2"/>
<sequence>MAKLALIEREKKRARLVAKFAAKREALKAIVEDQSKSEEERYEARLELQQLPRNANPTRQRNRCAITGRPRGTFRKFGLARNKIREIAFRGEIPGLTKASW</sequence>